<evidence type="ECO:0000255" key="1">
    <source>
        <dbReference type="HAMAP-Rule" id="MF_00111"/>
    </source>
</evidence>
<sequence>MGVSRVLHVEGGTPLKGELRVYPAKNAALPILAASLLTPEPITLVEVPRLRDVEVMLELLAHLGTQYAWEGRTLHLQTPEIKSTHAPYELVGQMRASFIVWGALLARAGEGHVSMPGGCAFGFRPVDQHIKALEALGAEVWEEDGTFHARRTRPLSGRVVFDLPTVGGTEQAMLAVALGGEATLVQAAVEPEVVDLGHFLALLGAEVEGLGSPIVRIKGAPRLKGGTYRIIPDRIEAGTYLLAAAATRGSLTLEGVRPDHLDALLDKLWRSGHRLEVGEDWIRFRATPDPAPFHVEAREYPGFPTDLQPIATAYLATVPGQSTVVDRIYPDRFTHVGELARMGAELYLRDRILTVQGRRLHGAQVKALDIRAGGALVVAALSAEGASEIEGVYFLERGYEHLTERLQALGARVHLRESPVALAAD</sequence>
<keyword id="KW-0131">Cell cycle</keyword>
<keyword id="KW-0132">Cell division</keyword>
<keyword id="KW-0133">Cell shape</keyword>
<keyword id="KW-0961">Cell wall biogenesis/degradation</keyword>
<keyword id="KW-0963">Cytoplasm</keyword>
<keyword id="KW-0573">Peptidoglycan synthesis</keyword>
<keyword id="KW-0670">Pyruvate</keyword>
<keyword id="KW-1185">Reference proteome</keyword>
<keyword id="KW-0808">Transferase</keyword>
<proteinExistence type="inferred from homology"/>
<name>MURA_THET8</name>
<feature type="chain" id="PRO_0000231292" description="UDP-N-acetylglucosamine 1-carboxyvinyltransferase">
    <location>
        <begin position="1"/>
        <end position="425"/>
    </location>
</feature>
<feature type="active site" description="Proton donor" evidence="1">
    <location>
        <position position="119"/>
    </location>
</feature>
<feature type="binding site" evidence="1">
    <location>
        <begin position="25"/>
        <end position="26"/>
    </location>
    <ligand>
        <name>phosphoenolpyruvate</name>
        <dbReference type="ChEBI" id="CHEBI:58702"/>
    </ligand>
</feature>
<feature type="binding site" evidence="1">
    <location>
        <position position="95"/>
    </location>
    <ligand>
        <name>UDP-N-acetyl-alpha-D-glucosamine</name>
        <dbReference type="ChEBI" id="CHEBI:57705"/>
    </ligand>
</feature>
<feature type="binding site" evidence="1">
    <location>
        <begin position="124"/>
        <end position="128"/>
    </location>
    <ligand>
        <name>UDP-N-acetyl-alpha-D-glucosamine</name>
        <dbReference type="ChEBI" id="CHEBI:57705"/>
    </ligand>
</feature>
<feature type="binding site" evidence="1">
    <location>
        <position position="306"/>
    </location>
    <ligand>
        <name>UDP-N-acetyl-alpha-D-glucosamine</name>
        <dbReference type="ChEBI" id="CHEBI:57705"/>
    </ligand>
</feature>
<feature type="binding site" evidence="1">
    <location>
        <position position="328"/>
    </location>
    <ligand>
        <name>UDP-N-acetyl-alpha-D-glucosamine</name>
        <dbReference type="ChEBI" id="CHEBI:57705"/>
    </ligand>
</feature>
<feature type="modified residue" description="2-(S-cysteinyl)pyruvic acid O-phosphothioketal" evidence="1">
    <location>
        <position position="119"/>
    </location>
</feature>
<dbReference type="EC" id="2.5.1.7" evidence="1"/>
<dbReference type="EMBL" id="AP008226">
    <property type="protein sequence ID" value="BAD69963.1"/>
    <property type="molecule type" value="Genomic_DNA"/>
</dbReference>
<dbReference type="RefSeq" id="WP_011227732.1">
    <property type="nucleotide sequence ID" value="NC_006461.1"/>
</dbReference>
<dbReference type="RefSeq" id="YP_143406.1">
    <property type="nucleotide sequence ID" value="NC_006461.1"/>
</dbReference>
<dbReference type="SMR" id="Q5SM03"/>
<dbReference type="EnsemblBacteria" id="BAD69963">
    <property type="protein sequence ID" value="BAD69963"/>
    <property type="gene ID" value="BAD69963"/>
</dbReference>
<dbReference type="GeneID" id="3169843"/>
<dbReference type="KEGG" id="ttj:TTHA0140"/>
<dbReference type="PATRIC" id="fig|300852.9.peg.138"/>
<dbReference type="eggNOG" id="COG0766">
    <property type="taxonomic scope" value="Bacteria"/>
</dbReference>
<dbReference type="HOGENOM" id="CLU_027387_0_1_0"/>
<dbReference type="PhylomeDB" id="Q5SM03"/>
<dbReference type="UniPathway" id="UPA00219"/>
<dbReference type="Proteomes" id="UP000000532">
    <property type="component" value="Chromosome"/>
</dbReference>
<dbReference type="GO" id="GO:0005737">
    <property type="term" value="C:cytoplasm"/>
    <property type="evidence" value="ECO:0007669"/>
    <property type="project" value="UniProtKB-SubCell"/>
</dbReference>
<dbReference type="GO" id="GO:0008760">
    <property type="term" value="F:UDP-N-acetylglucosamine 1-carboxyvinyltransferase activity"/>
    <property type="evidence" value="ECO:0007669"/>
    <property type="project" value="UniProtKB-UniRule"/>
</dbReference>
<dbReference type="GO" id="GO:0051301">
    <property type="term" value="P:cell division"/>
    <property type="evidence" value="ECO:0007669"/>
    <property type="project" value="UniProtKB-KW"/>
</dbReference>
<dbReference type="GO" id="GO:0071555">
    <property type="term" value="P:cell wall organization"/>
    <property type="evidence" value="ECO:0007669"/>
    <property type="project" value="UniProtKB-KW"/>
</dbReference>
<dbReference type="GO" id="GO:0009252">
    <property type="term" value="P:peptidoglycan biosynthetic process"/>
    <property type="evidence" value="ECO:0007669"/>
    <property type="project" value="UniProtKB-UniRule"/>
</dbReference>
<dbReference type="GO" id="GO:0008360">
    <property type="term" value="P:regulation of cell shape"/>
    <property type="evidence" value="ECO:0007669"/>
    <property type="project" value="UniProtKB-KW"/>
</dbReference>
<dbReference type="GO" id="GO:0019277">
    <property type="term" value="P:UDP-N-acetylgalactosamine biosynthetic process"/>
    <property type="evidence" value="ECO:0007669"/>
    <property type="project" value="InterPro"/>
</dbReference>
<dbReference type="CDD" id="cd01555">
    <property type="entry name" value="UdpNAET"/>
    <property type="match status" value="1"/>
</dbReference>
<dbReference type="Gene3D" id="3.65.10.10">
    <property type="entry name" value="Enolpyruvate transferase domain"/>
    <property type="match status" value="2"/>
</dbReference>
<dbReference type="HAMAP" id="MF_00111">
    <property type="entry name" value="MurA"/>
    <property type="match status" value="1"/>
</dbReference>
<dbReference type="InterPro" id="IPR001986">
    <property type="entry name" value="Enolpyruvate_Tfrase_dom"/>
</dbReference>
<dbReference type="InterPro" id="IPR036968">
    <property type="entry name" value="Enolpyruvate_Tfrase_sf"/>
</dbReference>
<dbReference type="InterPro" id="IPR050068">
    <property type="entry name" value="MurA_subfamily"/>
</dbReference>
<dbReference type="InterPro" id="IPR013792">
    <property type="entry name" value="RNA3'P_cycl/enolpyr_Trfase_a/b"/>
</dbReference>
<dbReference type="InterPro" id="IPR005750">
    <property type="entry name" value="UDP_GlcNAc_COvinyl_MurA"/>
</dbReference>
<dbReference type="NCBIfam" id="TIGR01072">
    <property type="entry name" value="murA"/>
    <property type="match status" value="1"/>
</dbReference>
<dbReference type="NCBIfam" id="NF006873">
    <property type="entry name" value="PRK09369.1"/>
    <property type="match status" value="1"/>
</dbReference>
<dbReference type="PANTHER" id="PTHR43783">
    <property type="entry name" value="UDP-N-ACETYLGLUCOSAMINE 1-CARBOXYVINYLTRANSFERASE"/>
    <property type="match status" value="1"/>
</dbReference>
<dbReference type="PANTHER" id="PTHR43783:SF1">
    <property type="entry name" value="UDP-N-ACETYLGLUCOSAMINE 1-CARBOXYVINYLTRANSFERASE"/>
    <property type="match status" value="1"/>
</dbReference>
<dbReference type="Pfam" id="PF00275">
    <property type="entry name" value="EPSP_synthase"/>
    <property type="match status" value="1"/>
</dbReference>
<dbReference type="SUPFAM" id="SSF55205">
    <property type="entry name" value="EPT/RTPC-like"/>
    <property type="match status" value="1"/>
</dbReference>
<reference key="1">
    <citation type="submission" date="2004-11" db="EMBL/GenBank/DDBJ databases">
        <title>Complete genome sequence of Thermus thermophilus HB8.</title>
        <authorList>
            <person name="Masui R."/>
            <person name="Kurokawa K."/>
            <person name="Nakagawa N."/>
            <person name="Tokunaga F."/>
            <person name="Koyama Y."/>
            <person name="Shibata T."/>
            <person name="Oshima T."/>
            <person name="Yokoyama S."/>
            <person name="Yasunaga T."/>
            <person name="Kuramitsu S."/>
        </authorList>
    </citation>
    <scope>NUCLEOTIDE SEQUENCE [LARGE SCALE GENOMIC DNA]</scope>
    <source>
        <strain>ATCC 27634 / DSM 579 / HB8</strain>
    </source>
</reference>
<organism>
    <name type="scientific">Thermus thermophilus (strain ATCC 27634 / DSM 579 / HB8)</name>
    <dbReference type="NCBI Taxonomy" id="300852"/>
    <lineage>
        <taxon>Bacteria</taxon>
        <taxon>Thermotogati</taxon>
        <taxon>Deinococcota</taxon>
        <taxon>Deinococci</taxon>
        <taxon>Thermales</taxon>
        <taxon>Thermaceae</taxon>
        <taxon>Thermus</taxon>
    </lineage>
</organism>
<protein>
    <recommendedName>
        <fullName evidence="1">UDP-N-acetylglucosamine 1-carboxyvinyltransferase</fullName>
        <ecNumber evidence="1">2.5.1.7</ecNumber>
    </recommendedName>
    <alternativeName>
        <fullName evidence="1">Enoylpyruvate transferase</fullName>
    </alternativeName>
    <alternativeName>
        <fullName evidence="1">UDP-N-acetylglucosamine enolpyruvyl transferase</fullName>
        <shortName evidence="1">EPT</shortName>
    </alternativeName>
</protein>
<gene>
    <name evidence="1" type="primary">murA</name>
    <name type="ordered locus">TTHA0140</name>
</gene>
<comment type="function">
    <text evidence="1">Cell wall formation. Adds enolpyruvyl to UDP-N-acetylglucosamine.</text>
</comment>
<comment type="catalytic activity">
    <reaction evidence="1">
        <text>phosphoenolpyruvate + UDP-N-acetyl-alpha-D-glucosamine = UDP-N-acetyl-3-O-(1-carboxyvinyl)-alpha-D-glucosamine + phosphate</text>
        <dbReference type="Rhea" id="RHEA:18681"/>
        <dbReference type="ChEBI" id="CHEBI:43474"/>
        <dbReference type="ChEBI" id="CHEBI:57705"/>
        <dbReference type="ChEBI" id="CHEBI:58702"/>
        <dbReference type="ChEBI" id="CHEBI:68483"/>
        <dbReference type="EC" id="2.5.1.7"/>
    </reaction>
</comment>
<comment type="pathway">
    <text evidence="1">Cell wall biogenesis; peptidoglycan biosynthesis.</text>
</comment>
<comment type="subcellular location">
    <subcellularLocation>
        <location evidence="1">Cytoplasm</location>
    </subcellularLocation>
</comment>
<comment type="similarity">
    <text evidence="1">Belongs to the EPSP synthase family. MurA subfamily.</text>
</comment>
<accession>Q5SM03</accession>